<comment type="function">
    <text evidence="1">Involved in the binding of tRNA to the ribosomes.</text>
</comment>
<comment type="subunit">
    <text evidence="1">Part of the 30S ribosomal subunit.</text>
</comment>
<comment type="similarity">
    <text evidence="1">Belongs to the universal ribosomal protein uS10 family.</text>
</comment>
<proteinExistence type="inferred from homology"/>
<dbReference type="EMBL" id="AP009484">
    <property type="protein sequence ID" value="BAH16901.1"/>
    <property type="molecule type" value="Genomic_DNA"/>
</dbReference>
<dbReference type="RefSeq" id="WP_012656105.1">
    <property type="nucleotide sequence ID" value="NC_011999.1"/>
</dbReference>
<dbReference type="SMR" id="B9E9J0"/>
<dbReference type="STRING" id="458233.MCCL_0194"/>
<dbReference type="GeneID" id="35294469"/>
<dbReference type="GeneID" id="61130616"/>
<dbReference type="KEGG" id="mcl:MCCL_0194"/>
<dbReference type="eggNOG" id="COG0051">
    <property type="taxonomic scope" value="Bacteria"/>
</dbReference>
<dbReference type="HOGENOM" id="CLU_122625_1_3_9"/>
<dbReference type="OrthoDB" id="9804464at2"/>
<dbReference type="Proteomes" id="UP000001383">
    <property type="component" value="Chromosome"/>
</dbReference>
<dbReference type="GO" id="GO:1990904">
    <property type="term" value="C:ribonucleoprotein complex"/>
    <property type="evidence" value="ECO:0007669"/>
    <property type="project" value="UniProtKB-KW"/>
</dbReference>
<dbReference type="GO" id="GO:0005840">
    <property type="term" value="C:ribosome"/>
    <property type="evidence" value="ECO:0007669"/>
    <property type="project" value="UniProtKB-KW"/>
</dbReference>
<dbReference type="GO" id="GO:0003735">
    <property type="term" value="F:structural constituent of ribosome"/>
    <property type="evidence" value="ECO:0007669"/>
    <property type="project" value="InterPro"/>
</dbReference>
<dbReference type="GO" id="GO:0000049">
    <property type="term" value="F:tRNA binding"/>
    <property type="evidence" value="ECO:0007669"/>
    <property type="project" value="UniProtKB-UniRule"/>
</dbReference>
<dbReference type="GO" id="GO:0006412">
    <property type="term" value="P:translation"/>
    <property type="evidence" value="ECO:0007669"/>
    <property type="project" value="UniProtKB-UniRule"/>
</dbReference>
<dbReference type="FunFam" id="3.30.70.600:FF:000001">
    <property type="entry name" value="30S ribosomal protein S10"/>
    <property type="match status" value="1"/>
</dbReference>
<dbReference type="Gene3D" id="3.30.70.600">
    <property type="entry name" value="Ribosomal protein S10 domain"/>
    <property type="match status" value="1"/>
</dbReference>
<dbReference type="HAMAP" id="MF_00508">
    <property type="entry name" value="Ribosomal_uS10"/>
    <property type="match status" value="1"/>
</dbReference>
<dbReference type="InterPro" id="IPR001848">
    <property type="entry name" value="Ribosomal_uS10"/>
</dbReference>
<dbReference type="InterPro" id="IPR018268">
    <property type="entry name" value="Ribosomal_uS10_CS"/>
</dbReference>
<dbReference type="InterPro" id="IPR027486">
    <property type="entry name" value="Ribosomal_uS10_dom"/>
</dbReference>
<dbReference type="InterPro" id="IPR036838">
    <property type="entry name" value="Ribosomal_uS10_dom_sf"/>
</dbReference>
<dbReference type="NCBIfam" id="NF001861">
    <property type="entry name" value="PRK00596.1"/>
    <property type="match status" value="1"/>
</dbReference>
<dbReference type="NCBIfam" id="TIGR01049">
    <property type="entry name" value="rpsJ_bact"/>
    <property type="match status" value="1"/>
</dbReference>
<dbReference type="PANTHER" id="PTHR11700">
    <property type="entry name" value="30S RIBOSOMAL PROTEIN S10 FAMILY MEMBER"/>
    <property type="match status" value="1"/>
</dbReference>
<dbReference type="Pfam" id="PF00338">
    <property type="entry name" value="Ribosomal_S10"/>
    <property type="match status" value="1"/>
</dbReference>
<dbReference type="PRINTS" id="PR00971">
    <property type="entry name" value="RIBOSOMALS10"/>
</dbReference>
<dbReference type="SMART" id="SM01403">
    <property type="entry name" value="Ribosomal_S10"/>
    <property type="match status" value="1"/>
</dbReference>
<dbReference type="SUPFAM" id="SSF54999">
    <property type="entry name" value="Ribosomal protein S10"/>
    <property type="match status" value="1"/>
</dbReference>
<dbReference type="PROSITE" id="PS00361">
    <property type="entry name" value="RIBOSOMAL_S10"/>
    <property type="match status" value="1"/>
</dbReference>
<reference key="1">
    <citation type="journal article" date="2009" name="J. Bacteriol.">
        <title>Complete genome sequence of Macrococcus caseolyticus strain JCSCS5402, reflecting the ancestral genome of the human-pathogenic staphylococci.</title>
        <authorList>
            <person name="Baba T."/>
            <person name="Kuwahara-Arai K."/>
            <person name="Uchiyama I."/>
            <person name="Takeuchi F."/>
            <person name="Ito T."/>
            <person name="Hiramatsu K."/>
        </authorList>
    </citation>
    <scope>NUCLEOTIDE SEQUENCE [LARGE SCALE GENOMIC DNA]</scope>
    <source>
        <strain>JCSC5402</strain>
    </source>
</reference>
<sequence>MAKQKIRIRLKAYDHRIIDQSAEKIVETAKRSGAEVSGPIPLPTEKTVYTIIRAVHKYKDSREQFEQRTHKRLIDIVNPTPKTVDALMGLNLPSGVDIEIKL</sequence>
<evidence type="ECO:0000255" key="1">
    <source>
        <dbReference type="HAMAP-Rule" id="MF_00508"/>
    </source>
</evidence>
<evidence type="ECO:0000305" key="2"/>
<organism>
    <name type="scientific">Macrococcus caseolyticus (strain JCSC5402)</name>
    <name type="common">Macrococcoides caseolyticum</name>
    <dbReference type="NCBI Taxonomy" id="458233"/>
    <lineage>
        <taxon>Bacteria</taxon>
        <taxon>Bacillati</taxon>
        <taxon>Bacillota</taxon>
        <taxon>Bacilli</taxon>
        <taxon>Bacillales</taxon>
        <taxon>Staphylococcaceae</taxon>
        <taxon>Macrococcoides</taxon>
    </lineage>
</organism>
<keyword id="KW-1185">Reference proteome</keyword>
<keyword id="KW-0687">Ribonucleoprotein</keyword>
<keyword id="KW-0689">Ribosomal protein</keyword>
<protein>
    <recommendedName>
        <fullName evidence="1">Small ribosomal subunit protein uS10</fullName>
    </recommendedName>
    <alternativeName>
        <fullName evidence="2">30S ribosomal protein S10</fullName>
    </alternativeName>
</protein>
<name>RS10_MACCJ</name>
<accession>B9E9J0</accession>
<feature type="chain" id="PRO_1000146061" description="Small ribosomal subunit protein uS10">
    <location>
        <begin position="1"/>
        <end position="102"/>
    </location>
</feature>
<gene>
    <name evidence="1" type="primary">rpsJ</name>
    <name type="ordered locus">MCCL_0194</name>
</gene>